<accession>Q94JV4</accession>
<gene>
    <name type="ordered locus">At1g54290</name>
    <name type="ORF">F20D21.53</name>
</gene>
<protein>
    <recommendedName>
        <fullName>Protein translation factor SUI1 homolog 2</fullName>
    </recommendedName>
</protein>
<keyword id="KW-0007">Acetylation</keyword>
<keyword id="KW-0648">Protein biosynthesis</keyword>
<keyword id="KW-1185">Reference proteome</keyword>
<keyword id="KW-0810">Translation regulation</keyword>
<evidence type="ECO:0000250" key="1">
    <source>
        <dbReference type="UniProtKB" id="P41568"/>
    </source>
</evidence>
<evidence type="ECO:0000305" key="2"/>
<reference key="1">
    <citation type="journal article" date="2000" name="Nature">
        <title>Sequence and analysis of chromosome 1 of the plant Arabidopsis thaliana.</title>
        <authorList>
            <person name="Theologis A."/>
            <person name="Ecker J.R."/>
            <person name="Palm C.J."/>
            <person name="Federspiel N.A."/>
            <person name="Kaul S."/>
            <person name="White O."/>
            <person name="Alonso J."/>
            <person name="Altafi H."/>
            <person name="Araujo R."/>
            <person name="Bowman C.L."/>
            <person name="Brooks S.Y."/>
            <person name="Buehler E."/>
            <person name="Chan A."/>
            <person name="Chao Q."/>
            <person name="Chen H."/>
            <person name="Cheuk R.F."/>
            <person name="Chin C.W."/>
            <person name="Chung M.K."/>
            <person name="Conn L."/>
            <person name="Conway A.B."/>
            <person name="Conway A.R."/>
            <person name="Creasy T.H."/>
            <person name="Dewar K."/>
            <person name="Dunn P."/>
            <person name="Etgu P."/>
            <person name="Feldblyum T.V."/>
            <person name="Feng J.-D."/>
            <person name="Fong B."/>
            <person name="Fujii C.Y."/>
            <person name="Gill J.E."/>
            <person name="Goldsmith A.D."/>
            <person name="Haas B."/>
            <person name="Hansen N.F."/>
            <person name="Hughes B."/>
            <person name="Huizar L."/>
            <person name="Hunter J.L."/>
            <person name="Jenkins J."/>
            <person name="Johnson-Hopson C."/>
            <person name="Khan S."/>
            <person name="Khaykin E."/>
            <person name="Kim C.J."/>
            <person name="Koo H.L."/>
            <person name="Kremenetskaia I."/>
            <person name="Kurtz D.B."/>
            <person name="Kwan A."/>
            <person name="Lam B."/>
            <person name="Langin-Hooper S."/>
            <person name="Lee A."/>
            <person name="Lee J.M."/>
            <person name="Lenz C.A."/>
            <person name="Li J.H."/>
            <person name="Li Y.-P."/>
            <person name="Lin X."/>
            <person name="Liu S.X."/>
            <person name="Liu Z.A."/>
            <person name="Luros J.S."/>
            <person name="Maiti R."/>
            <person name="Marziali A."/>
            <person name="Militscher J."/>
            <person name="Miranda M."/>
            <person name="Nguyen M."/>
            <person name="Nierman W.C."/>
            <person name="Osborne B.I."/>
            <person name="Pai G."/>
            <person name="Peterson J."/>
            <person name="Pham P.K."/>
            <person name="Rizzo M."/>
            <person name="Rooney T."/>
            <person name="Rowley D."/>
            <person name="Sakano H."/>
            <person name="Salzberg S.L."/>
            <person name="Schwartz J.R."/>
            <person name="Shinn P."/>
            <person name="Southwick A.M."/>
            <person name="Sun H."/>
            <person name="Tallon L.J."/>
            <person name="Tambunga G."/>
            <person name="Toriumi M.J."/>
            <person name="Town C.D."/>
            <person name="Utterback T."/>
            <person name="Van Aken S."/>
            <person name="Vaysberg M."/>
            <person name="Vysotskaia V.S."/>
            <person name="Walker M."/>
            <person name="Wu D."/>
            <person name="Yu G."/>
            <person name="Fraser C.M."/>
            <person name="Venter J.C."/>
            <person name="Davis R.W."/>
        </authorList>
    </citation>
    <scope>NUCLEOTIDE SEQUENCE [LARGE SCALE GENOMIC DNA]</scope>
    <source>
        <strain>cv. Columbia</strain>
    </source>
</reference>
<reference key="2">
    <citation type="journal article" date="2017" name="Plant J.">
        <title>Araport11: a complete reannotation of the Arabidopsis thaliana reference genome.</title>
        <authorList>
            <person name="Cheng C.Y."/>
            <person name="Krishnakumar V."/>
            <person name="Chan A.P."/>
            <person name="Thibaud-Nissen F."/>
            <person name="Schobel S."/>
            <person name="Town C.D."/>
        </authorList>
    </citation>
    <scope>GENOME REANNOTATION</scope>
    <source>
        <strain>cv. Columbia</strain>
    </source>
</reference>
<reference key="3">
    <citation type="journal article" date="2003" name="Science">
        <title>Empirical analysis of transcriptional activity in the Arabidopsis genome.</title>
        <authorList>
            <person name="Yamada K."/>
            <person name="Lim J."/>
            <person name="Dale J.M."/>
            <person name="Chen H."/>
            <person name="Shinn P."/>
            <person name="Palm C.J."/>
            <person name="Southwick A.M."/>
            <person name="Wu H.C."/>
            <person name="Kim C.J."/>
            <person name="Nguyen M."/>
            <person name="Pham P.K."/>
            <person name="Cheuk R.F."/>
            <person name="Karlin-Newmann G."/>
            <person name="Liu S.X."/>
            <person name="Lam B."/>
            <person name="Sakano H."/>
            <person name="Wu T."/>
            <person name="Yu G."/>
            <person name="Miranda M."/>
            <person name="Quach H.L."/>
            <person name="Tripp M."/>
            <person name="Chang C.H."/>
            <person name="Lee J.M."/>
            <person name="Toriumi M.J."/>
            <person name="Chan M.M."/>
            <person name="Tang C.C."/>
            <person name="Onodera C.S."/>
            <person name="Deng J.M."/>
            <person name="Akiyama K."/>
            <person name="Ansari Y."/>
            <person name="Arakawa T."/>
            <person name="Banh J."/>
            <person name="Banno F."/>
            <person name="Bowser L."/>
            <person name="Brooks S.Y."/>
            <person name="Carninci P."/>
            <person name="Chao Q."/>
            <person name="Choy N."/>
            <person name="Enju A."/>
            <person name="Goldsmith A.D."/>
            <person name="Gurjal M."/>
            <person name="Hansen N.F."/>
            <person name="Hayashizaki Y."/>
            <person name="Johnson-Hopson C."/>
            <person name="Hsuan V.W."/>
            <person name="Iida K."/>
            <person name="Karnes M."/>
            <person name="Khan S."/>
            <person name="Koesema E."/>
            <person name="Ishida J."/>
            <person name="Jiang P.X."/>
            <person name="Jones T."/>
            <person name="Kawai J."/>
            <person name="Kamiya A."/>
            <person name="Meyers C."/>
            <person name="Nakajima M."/>
            <person name="Narusaka M."/>
            <person name="Seki M."/>
            <person name="Sakurai T."/>
            <person name="Satou M."/>
            <person name="Tamse R."/>
            <person name="Vaysberg M."/>
            <person name="Wallender E.K."/>
            <person name="Wong C."/>
            <person name="Yamamura Y."/>
            <person name="Yuan S."/>
            <person name="Shinozaki K."/>
            <person name="Davis R.W."/>
            <person name="Theologis A."/>
            <person name="Ecker J.R."/>
        </authorList>
    </citation>
    <scope>NUCLEOTIDE SEQUENCE [LARGE SCALE MRNA]</scope>
    <source>
        <strain>cv. Columbia</strain>
    </source>
</reference>
<name>SUI12_ARATH</name>
<dbReference type="EMBL" id="AC005287">
    <property type="protein sequence ID" value="AAD25609.1"/>
    <property type="molecule type" value="Genomic_DNA"/>
</dbReference>
<dbReference type="EMBL" id="CP002684">
    <property type="protein sequence ID" value="AEE33076.1"/>
    <property type="molecule type" value="Genomic_DNA"/>
</dbReference>
<dbReference type="EMBL" id="AF372910">
    <property type="protein sequence ID" value="AAK49626.1"/>
    <property type="molecule type" value="mRNA"/>
</dbReference>
<dbReference type="EMBL" id="BT000649">
    <property type="protein sequence ID" value="AAN18215.1"/>
    <property type="molecule type" value="mRNA"/>
</dbReference>
<dbReference type="PIR" id="D96584">
    <property type="entry name" value="D96584"/>
</dbReference>
<dbReference type="RefSeq" id="NP_175831.1">
    <property type="nucleotide sequence ID" value="NM_104307.4"/>
</dbReference>
<dbReference type="SMR" id="Q94JV4"/>
<dbReference type="BioGRID" id="27095">
    <property type="interactions" value="2"/>
</dbReference>
<dbReference type="FunCoup" id="Q94JV4">
    <property type="interactions" value="3287"/>
</dbReference>
<dbReference type="IntAct" id="Q94JV4">
    <property type="interactions" value="1"/>
</dbReference>
<dbReference type="STRING" id="3702.Q94JV4"/>
<dbReference type="PaxDb" id="3702-AT1G54290.1"/>
<dbReference type="ProteomicsDB" id="228400"/>
<dbReference type="EnsemblPlants" id="AT1G54290.1">
    <property type="protein sequence ID" value="AT1G54290.1"/>
    <property type="gene ID" value="AT1G54290"/>
</dbReference>
<dbReference type="GeneID" id="841870"/>
<dbReference type="Gramene" id="AT1G54290.1">
    <property type="protein sequence ID" value="AT1G54290.1"/>
    <property type="gene ID" value="AT1G54290"/>
</dbReference>
<dbReference type="KEGG" id="ath:AT1G54290"/>
<dbReference type="Araport" id="AT1G54290"/>
<dbReference type="TAIR" id="AT1G54290"/>
<dbReference type="eggNOG" id="KOG1770">
    <property type="taxonomic scope" value="Eukaryota"/>
</dbReference>
<dbReference type="HOGENOM" id="CLU_082805_3_0_1"/>
<dbReference type="InParanoid" id="Q94JV4"/>
<dbReference type="OMA" id="ICNDMHE"/>
<dbReference type="OrthoDB" id="10248435at2759"/>
<dbReference type="PhylomeDB" id="Q94JV4"/>
<dbReference type="PRO" id="PR:Q94JV4"/>
<dbReference type="Proteomes" id="UP000006548">
    <property type="component" value="Chromosome 1"/>
</dbReference>
<dbReference type="ExpressionAtlas" id="Q94JV4">
    <property type="expression patterns" value="baseline and differential"/>
</dbReference>
<dbReference type="GO" id="GO:0005829">
    <property type="term" value="C:cytosol"/>
    <property type="evidence" value="ECO:0007005"/>
    <property type="project" value="TAIR"/>
</dbReference>
<dbReference type="GO" id="GO:0005634">
    <property type="term" value="C:nucleus"/>
    <property type="evidence" value="ECO:0007005"/>
    <property type="project" value="TAIR"/>
</dbReference>
<dbReference type="GO" id="GO:0003729">
    <property type="term" value="F:mRNA binding"/>
    <property type="evidence" value="ECO:0000314"/>
    <property type="project" value="TAIR"/>
</dbReference>
<dbReference type="GO" id="GO:0003743">
    <property type="term" value="F:translation initiation factor activity"/>
    <property type="evidence" value="ECO:0007669"/>
    <property type="project" value="InterPro"/>
</dbReference>
<dbReference type="GO" id="GO:0006417">
    <property type="term" value="P:regulation of translation"/>
    <property type="evidence" value="ECO:0007669"/>
    <property type="project" value="UniProtKB-KW"/>
</dbReference>
<dbReference type="CDD" id="cd11566">
    <property type="entry name" value="eIF1_SUI1"/>
    <property type="match status" value="1"/>
</dbReference>
<dbReference type="FunFam" id="3.30.780.10:FF:000001">
    <property type="entry name" value="Eukaryotic translation initiation factor SUI1"/>
    <property type="match status" value="1"/>
</dbReference>
<dbReference type="Gene3D" id="3.30.780.10">
    <property type="entry name" value="SUI1-like domain"/>
    <property type="match status" value="1"/>
</dbReference>
<dbReference type="InterPro" id="IPR001950">
    <property type="entry name" value="SUI1"/>
</dbReference>
<dbReference type="InterPro" id="IPR036877">
    <property type="entry name" value="SUI1_dom_sf"/>
</dbReference>
<dbReference type="InterPro" id="IPR005874">
    <property type="entry name" value="SUI1_euk"/>
</dbReference>
<dbReference type="NCBIfam" id="TIGR01160">
    <property type="entry name" value="SUI1_MOF2"/>
    <property type="match status" value="1"/>
</dbReference>
<dbReference type="PANTHER" id="PTHR10388">
    <property type="entry name" value="EUKARYOTIC TRANSLATION INITIATION FACTOR SUI1"/>
    <property type="match status" value="1"/>
</dbReference>
<dbReference type="Pfam" id="PF01253">
    <property type="entry name" value="SUI1"/>
    <property type="match status" value="1"/>
</dbReference>
<dbReference type="PIRSF" id="PIRSF004499">
    <property type="entry name" value="SUI1_euk"/>
    <property type="match status" value="1"/>
</dbReference>
<dbReference type="SUPFAM" id="SSF55159">
    <property type="entry name" value="eIF1-like"/>
    <property type="match status" value="1"/>
</dbReference>
<dbReference type="PROSITE" id="PS50296">
    <property type="entry name" value="SUI1"/>
    <property type="match status" value="1"/>
</dbReference>
<proteinExistence type="inferred from homology"/>
<sequence>MSDLEVQVPTAFDPFADANAEDSGAGTKEYVHIRVQQRNGRKSLTTVQGLKKEYSYSKILKDLKKEFCCNGTVVQDSELGQVIQLQGDQRKNVSTFLVQAGLVKKDNIKIHGF</sequence>
<feature type="initiator methionine" description="Removed" evidence="1">
    <location>
        <position position="1"/>
    </location>
</feature>
<feature type="chain" id="PRO_0000130568" description="Protein translation factor SUI1 homolog 2">
    <location>
        <begin position="2"/>
        <end position="113"/>
    </location>
</feature>
<feature type="modified residue" description="N-acetylserine" evidence="1">
    <location>
        <position position="2"/>
    </location>
</feature>
<organism>
    <name type="scientific">Arabidopsis thaliana</name>
    <name type="common">Mouse-ear cress</name>
    <dbReference type="NCBI Taxonomy" id="3702"/>
    <lineage>
        <taxon>Eukaryota</taxon>
        <taxon>Viridiplantae</taxon>
        <taxon>Streptophyta</taxon>
        <taxon>Embryophyta</taxon>
        <taxon>Tracheophyta</taxon>
        <taxon>Spermatophyta</taxon>
        <taxon>Magnoliopsida</taxon>
        <taxon>eudicotyledons</taxon>
        <taxon>Gunneridae</taxon>
        <taxon>Pentapetalae</taxon>
        <taxon>rosids</taxon>
        <taxon>malvids</taxon>
        <taxon>Brassicales</taxon>
        <taxon>Brassicaceae</taxon>
        <taxon>Camelineae</taxon>
        <taxon>Arabidopsis</taxon>
    </lineage>
</organism>
<comment type="function">
    <text>Probably involved in translation.</text>
</comment>
<comment type="similarity">
    <text evidence="2">Belongs to the SUI1 family.</text>
</comment>